<dbReference type="EMBL" id="AF164409">
    <property type="protein sequence ID" value="AAF66196.1"/>
    <property type="molecule type" value="Genomic_DNA"/>
</dbReference>
<dbReference type="RefSeq" id="YP_009924048.1">
    <property type="nucleotide sequence ID" value="NC_050415.1"/>
</dbReference>
<dbReference type="GeneID" id="58916064"/>
<dbReference type="GO" id="GO:0009507">
    <property type="term" value="C:chloroplast"/>
    <property type="evidence" value="ECO:0007669"/>
    <property type="project" value="UniProtKB-SubCell"/>
</dbReference>
<dbReference type="GO" id="GO:0003723">
    <property type="term" value="F:RNA binding"/>
    <property type="evidence" value="ECO:0007669"/>
    <property type="project" value="UniProtKB-KW"/>
</dbReference>
<dbReference type="GO" id="GO:0006397">
    <property type="term" value="P:mRNA processing"/>
    <property type="evidence" value="ECO:0007669"/>
    <property type="project" value="UniProtKB-KW"/>
</dbReference>
<dbReference type="GO" id="GO:0008380">
    <property type="term" value="P:RNA splicing"/>
    <property type="evidence" value="ECO:0007669"/>
    <property type="project" value="UniProtKB-UniRule"/>
</dbReference>
<dbReference type="GO" id="GO:0008033">
    <property type="term" value="P:tRNA processing"/>
    <property type="evidence" value="ECO:0007669"/>
    <property type="project" value="UniProtKB-KW"/>
</dbReference>
<dbReference type="HAMAP" id="MF_01390">
    <property type="entry name" value="MatK"/>
    <property type="match status" value="1"/>
</dbReference>
<dbReference type="InterPro" id="IPR024937">
    <property type="entry name" value="Domain_X"/>
</dbReference>
<dbReference type="InterPro" id="IPR002866">
    <property type="entry name" value="Maturase_MatK"/>
</dbReference>
<dbReference type="InterPro" id="IPR024942">
    <property type="entry name" value="Maturase_MatK_N"/>
</dbReference>
<dbReference type="PANTHER" id="PTHR34811">
    <property type="entry name" value="MATURASE K"/>
    <property type="match status" value="1"/>
</dbReference>
<dbReference type="PANTHER" id="PTHR34811:SF1">
    <property type="entry name" value="MATURASE K"/>
    <property type="match status" value="1"/>
</dbReference>
<dbReference type="Pfam" id="PF01348">
    <property type="entry name" value="Intron_maturas2"/>
    <property type="match status" value="1"/>
</dbReference>
<dbReference type="Pfam" id="PF01824">
    <property type="entry name" value="MatK_N"/>
    <property type="match status" value="1"/>
</dbReference>
<gene>
    <name evidence="1" type="primary">matK</name>
</gene>
<sequence length="513" mass="61082">MEKFEGYSEKQKSRQQNFVFPLLFQEYIYAFAHDYGLNGCKPVEILGCNTKKFSSLLVKRLIIRMYQQNFWINSVNHPNQDLLLDRSNHFYSEFYSQILSEGFAIVVEIPFSLGELSYSQEKEIPKFQNLQSIHSIFPFLEDKFLHLHSISHIEIPYPIHLEILVQFLEYRIQDVPSLHLLRFFLNYYSNWNSLITSMKSFFLLKKENKRLFQFLYNSYVSEYEFFLLFLHKQSSCLPLTSSGTFLERIIFSRKMEHFGVMYPEFFRKTIWIFMDPLMHYVRYQGKAILASKGTLLLKKKWKSYLVNFSQYFFSFWTQPQRICLNRLTNSCFDFMGYLSSVPINTLLVRNQMLDNSFRISIRMKKFDTIVPATPLIGALSKAQFCTGSGHPISKPVWTDLSDWDILDRFGRICRNLFHYHSGSSKKQTLYRLKYILRLSCARTLARKHKSTVRTFMQRLGSVFLEEFFTEEEQVFSLMFIKTTHFSFHGSHSDRIWYLDIIRINDLVNPLTLN</sequence>
<keyword id="KW-0150">Chloroplast</keyword>
<keyword id="KW-0507">mRNA processing</keyword>
<keyword id="KW-0934">Plastid</keyword>
<keyword id="KW-0694">RNA-binding</keyword>
<keyword id="KW-0819">tRNA processing</keyword>
<reference key="1">
    <citation type="journal article" date="1999" name="Ann. Mo. Bot. Gard.">
        <title>Phylogeny of Poaceae inferred from matK sequences.</title>
        <authorList>
            <person name="Hilu K.W."/>
            <person name="Alice L.A."/>
            <person name="Liang H."/>
        </authorList>
    </citation>
    <scope>NUCLEOTIDE SEQUENCE [GENOMIC DNA]</scope>
</reference>
<geneLocation type="chloroplast"/>
<organism>
    <name type="scientific">Danthonia spicata</name>
    <name type="common">Poverty oatgrass</name>
    <name type="synonym">Avena spicata</name>
    <dbReference type="NCBI Taxonomy" id="42048"/>
    <lineage>
        <taxon>Eukaryota</taxon>
        <taxon>Viridiplantae</taxon>
        <taxon>Streptophyta</taxon>
        <taxon>Embryophyta</taxon>
        <taxon>Tracheophyta</taxon>
        <taxon>Spermatophyta</taxon>
        <taxon>Magnoliopsida</taxon>
        <taxon>Liliopsida</taxon>
        <taxon>Poales</taxon>
        <taxon>Poaceae</taxon>
        <taxon>PACMAD clade</taxon>
        <taxon>Danthonioideae</taxon>
        <taxon>Danthonieae</taxon>
        <taxon>Danthonia</taxon>
    </lineage>
</organism>
<name>MATK_DANSP</name>
<proteinExistence type="inferred from homology"/>
<accession>Q9MUY2</accession>
<comment type="function">
    <text evidence="1">Usually encoded in the trnK tRNA gene intron. Probably assists in splicing its own and other chloroplast group II introns.</text>
</comment>
<comment type="subcellular location">
    <subcellularLocation>
        <location>Plastid</location>
        <location>Chloroplast</location>
    </subcellularLocation>
</comment>
<comment type="similarity">
    <text evidence="1">Belongs to the intron maturase 2 family. MatK subfamily.</text>
</comment>
<protein>
    <recommendedName>
        <fullName evidence="1">Maturase K</fullName>
    </recommendedName>
    <alternativeName>
        <fullName evidence="1">Intron maturase</fullName>
    </alternativeName>
</protein>
<evidence type="ECO:0000255" key="1">
    <source>
        <dbReference type="HAMAP-Rule" id="MF_01390"/>
    </source>
</evidence>
<feature type="chain" id="PRO_0000143357" description="Maturase K">
    <location>
        <begin position="1"/>
        <end position="513"/>
    </location>
</feature>